<keyword id="KW-0963">Cytoplasm</keyword>
<keyword id="KW-0238">DNA-binding</keyword>
<protein>
    <recommendedName>
        <fullName evidence="1">Nucleoid-associated protein BAMEG_0027</fullName>
    </recommendedName>
</protein>
<reference key="1">
    <citation type="submission" date="2008-10" db="EMBL/GenBank/DDBJ databases">
        <title>Genome sequence of Bacillus anthracis str. CDC 684.</title>
        <authorList>
            <person name="Dodson R.J."/>
            <person name="Munk A.C."/>
            <person name="Brettin T."/>
            <person name="Bruce D."/>
            <person name="Detter C."/>
            <person name="Tapia R."/>
            <person name="Han C."/>
            <person name="Sutton G."/>
            <person name="Sims D."/>
        </authorList>
    </citation>
    <scope>NUCLEOTIDE SEQUENCE [LARGE SCALE GENOMIC DNA]</scope>
    <source>
        <strain>CDC 684 / NRRL 3495</strain>
    </source>
</reference>
<feature type="chain" id="PRO_1000197640" description="Nucleoid-associated protein BAMEG_0027">
    <location>
        <begin position="1"/>
        <end position="109"/>
    </location>
</feature>
<organism>
    <name type="scientific">Bacillus anthracis (strain CDC 684 / NRRL 3495)</name>
    <dbReference type="NCBI Taxonomy" id="568206"/>
    <lineage>
        <taxon>Bacteria</taxon>
        <taxon>Bacillati</taxon>
        <taxon>Bacillota</taxon>
        <taxon>Bacilli</taxon>
        <taxon>Bacillales</taxon>
        <taxon>Bacillaceae</taxon>
        <taxon>Bacillus</taxon>
        <taxon>Bacillus cereus group</taxon>
    </lineage>
</organism>
<proteinExistence type="inferred from homology"/>
<dbReference type="EMBL" id="CP001215">
    <property type="protein sequence ID" value="ACP13524.1"/>
    <property type="molecule type" value="Genomic_DNA"/>
</dbReference>
<dbReference type="SMR" id="C3LIZ6"/>
<dbReference type="KEGG" id="bah:BAMEG_0027"/>
<dbReference type="HOGENOM" id="CLU_140930_1_0_9"/>
<dbReference type="GO" id="GO:0043590">
    <property type="term" value="C:bacterial nucleoid"/>
    <property type="evidence" value="ECO:0007669"/>
    <property type="project" value="UniProtKB-UniRule"/>
</dbReference>
<dbReference type="GO" id="GO:0005829">
    <property type="term" value="C:cytosol"/>
    <property type="evidence" value="ECO:0007669"/>
    <property type="project" value="TreeGrafter"/>
</dbReference>
<dbReference type="GO" id="GO:0003677">
    <property type="term" value="F:DNA binding"/>
    <property type="evidence" value="ECO:0007669"/>
    <property type="project" value="UniProtKB-UniRule"/>
</dbReference>
<dbReference type="FunFam" id="3.30.1310.10:FF:000002">
    <property type="entry name" value="Nucleoid-associated protein IKC_06587"/>
    <property type="match status" value="1"/>
</dbReference>
<dbReference type="Gene3D" id="3.30.1310.10">
    <property type="entry name" value="Nucleoid-associated protein YbaB-like domain"/>
    <property type="match status" value="1"/>
</dbReference>
<dbReference type="HAMAP" id="MF_00274">
    <property type="entry name" value="DNA_YbaB_EbfC"/>
    <property type="match status" value="1"/>
</dbReference>
<dbReference type="InterPro" id="IPR036894">
    <property type="entry name" value="YbaB-like_sf"/>
</dbReference>
<dbReference type="InterPro" id="IPR004401">
    <property type="entry name" value="YbaB/EbfC"/>
</dbReference>
<dbReference type="NCBIfam" id="TIGR00103">
    <property type="entry name" value="DNA_YbaB_EbfC"/>
    <property type="match status" value="1"/>
</dbReference>
<dbReference type="PANTHER" id="PTHR33449">
    <property type="entry name" value="NUCLEOID-ASSOCIATED PROTEIN YBAB"/>
    <property type="match status" value="1"/>
</dbReference>
<dbReference type="PANTHER" id="PTHR33449:SF1">
    <property type="entry name" value="NUCLEOID-ASSOCIATED PROTEIN YBAB"/>
    <property type="match status" value="1"/>
</dbReference>
<dbReference type="Pfam" id="PF02575">
    <property type="entry name" value="YbaB_DNA_bd"/>
    <property type="match status" value="1"/>
</dbReference>
<dbReference type="PIRSF" id="PIRSF004555">
    <property type="entry name" value="UCP004555"/>
    <property type="match status" value="1"/>
</dbReference>
<dbReference type="SUPFAM" id="SSF82607">
    <property type="entry name" value="YbaB-like"/>
    <property type="match status" value="1"/>
</dbReference>
<comment type="function">
    <text evidence="1">Binds to DNA and alters its conformation. May be involved in regulation of gene expression, nucleoid organization and DNA protection.</text>
</comment>
<comment type="subunit">
    <text evidence="1">Homodimer.</text>
</comment>
<comment type="subcellular location">
    <subcellularLocation>
        <location evidence="1">Cytoplasm</location>
        <location evidence="1">Nucleoid</location>
    </subcellularLocation>
</comment>
<comment type="similarity">
    <text evidence="1">Belongs to the YbaB/EbfC family.</text>
</comment>
<gene>
    <name type="ordered locus">BAMEG_0027</name>
</gene>
<evidence type="ECO:0000255" key="1">
    <source>
        <dbReference type="HAMAP-Rule" id="MF_00274"/>
    </source>
</evidence>
<accession>C3LIZ6</accession>
<sequence length="109" mass="11863">MMRGGMGNMNNMMKQMQKMQKEMAKAQEELGEKTVEGTAGGGMITVIANGHKQILEVKVKEEVVDPEDIEMLQDLVLAATNDALKKADELSNSTMGKFTKGLNLPGGMF</sequence>
<name>Y027_BACAC</name>